<name>RECF_CHLCV</name>
<feature type="chain" id="PRO_0000196403" description="DNA replication and repair protein RecF">
    <location>
        <begin position="1"/>
        <end position="367"/>
    </location>
</feature>
<feature type="binding site" evidence="1">
    <location>
        <begin position="30"/>
        <end position="37"/>
    </location>
    <ligand>
        <name>ATP</name>
        <dbReference type="ChEBI" id="CHEBI:30616"/>
    </ligand>
</feature>
<comment type="function">
    <text evidence="1">The RecF protein is involved in DNA metabolism; it is required for DNA replication and normal SOS inducibility. RecF binds preferentially to single-stranded, linear DNA. It also seems to bind ATP.</text>
</comment>
<comment type="subcellular location">
    <subcellularLocation>
        <location evidence="1">Cytoplasm</location>
    </subcellularLocation>
</comment>
<comment type="similarity">
    <text evidence="1">Belongs to the RecF family.</text>
</comment>
<accession>Q823G6</accession>
<protein>
    <recommendedName>
        <fullName evidence="1">DNA replication and repair protein RecF</fullName>
    </recommendedName>
</protein>
<gene>
    <name evidence="1" type="primary">recF</name>
    <name type="ordered locus">CCA_00444</name>
</gene>
<keyword id="KW-0067">ATP-binding</keyword>
<keyword id="KW-0963">Cytoplasm</keyword>
<keyword id="KW-0227">DNA damage</keyword>
<keyword id="KW-0234">DNA repair</keyword>
<keyword id="KW-0235">DNA replication</keyword>
<keyword id="KW-0238">DNA-binding</keyword>
<keyword id="KW-0547">Nucleotide-binding</keyword>
<keyword id="KW-0742">SOS response</keyword>
<dbReference type="EMBL" id="AE015925">
    <property type="protein sequence ID" value="AAP05190.1"/>
    <property type="molecule type" value="Genomic_DNA"/>
</dbReference>
<dbReference type="RefSeq" id="WP_011006406.1">
    <property type="nucleotide sequence ID" value="NC_003361.3"/>
</dbReference>
<dbReference type="SMR" id="Q823G6"/>
<dbReference type="STRING" id="227941.CCA_00444"/>
<dbReference type="KEGG" id="cca:CCA_00444"/>
<dbReference type="eggNOG" id="COG1195">
    <property type="taxonomic scope" value="Bacteria"/>
</dbReference>
<dbReference type="HOGENOM" id="CLU_040267_0_1_0"/>
<dbReference type="OrthoDB" id="9803889at2"/>
<dbReference type="Proteomes" id="UP000002193">
    <property type="component" value="Chromosome"/>
</dbReference>
<dbReference type="GO" id="GO:0005737">
    <property type="term" value="C:cytoplasm"/>
    <property type="evidence" value="ECO:0007669"/>
    <property type="project" value="UniProtKB-SubCell"/>
</dbReference>
<dbReference type="GO" id="GO:0005524">
    <property type="term" value="F:ATP binding"/>
    <property type="evidence" value="ECO:0007669"/>
    <property type="project" value="UniProtKB-UniRule"/>
</dbReference>
<dbReference type="GO" id="GO:0003697">
    <property type="term" value="F:single-stranded DNA binding"/>
    <property type="evidence" value="ECO:0007669"/>
    <property type="project" value="UniProtKB-UniRule"/>
</dbReference>
<dbReference type="GO" id="GO:0006260">
    <property type="term" value="P:DNA replication"/>
    <property type="evidence" value="ECO:0007669"/>
    <property type="project" value="UniProtKB-UniRule"/>
</dbReference>
<dbReference type="GO" id="GO:0000731">
    <property type="term" value="P:DNA synthesis involved in DNA repair"/>
    <property type="evidence" value="ECO:0007669"/>
    <property type="project" value="TreeGrafter"/>
</dbReference>
<dbReference type="GO" id="GO:0006302">
    <property type="term" value="P:double-strand break repair"/>
    <property type="evidence" value="ECO:0007669"/>
    <property type="project" value="TreeGrafter"/>
</dbReference>
<dbReference type="GO" id="GO:0009432">
    <property type="term" value="P:SOS response"/>
    <property type="evidence" value="ECO:0007669"/>
    <property type="project" value="UniProtKB-UniRule"/>
</dbReference>
<dbReference type="Gene3D" id="3.40.50.300">
    <property type="entry name" value="P-loop containing nucleotide triphosphate hydrolases"/>
    <property type="match status" value="1"/>
</dbReference>
<dbReference type="Gene3D" id="1.20.1050.90">
    <property type="entry name" value="RecF/RecN/SMC, N-terminal domain"/>
    <property type="match status" value="1"/>
</dbReference>
<dbReference type="HAMAP" id="MF_00365">
    <property type="entry name" value="RecF"/>
    <property type="match status" value="1"/>
</dbReference>
<dbReference type="InterPro" id="IPR001238">
    <property type="entry name" value="DNA-binding_RecF"/>
</dbReference>
<dbReference type="InterPro" id="IPR018078">
    <property type="entry name" value="DNA-binding_RecF_CS"/>
</dbReference>
<dbReference type="InterPro" id="IPR027417">
    <property type="entry name" value="P-loop_NTPase"/>
</dbReference>
<dbReference type="InterPro" id="IPR003395">
    <property type="entry name" value="RecF/RecN/SMC_N"/>
</dbReference>
<dbReference type="InterPro" id="IPR042174">
    <property type="entry name" value="RecF_2"/>
</dbReference>
<dbReference type="NCBIfam" id="TIGR00611">
    <property type="entry name" value="recf"/>
    <property type="match status" value="1"/>
</dbReference>
<dbReference type="PANTHER" id="PTHR32182">
    <property type="entry name" value="DNA REPLICATION AND REPAIR PROTEIN RECF"/>
    <property type="match status" value="1"/>
</dbReference>
<dbReference type="PANTHER" id="PTHR32182:SF0">
    <property type="entry name" value="DNA REPLICATION AND REPAIR PROTEIN RECF"/>
    <property type="match status" value="1"/>
</dbReference>
<dbReference type="Pfam" id="PF02463">
    <property type="entry name" value="SMC_N"/>
    <property type="match status" value="1"/>
</dbReference>
<dbReference type="SUPFAM" id="SSF52540">
    <property type="entry name" value="P-loop containing nucleoside triphosphate hydrolases"/>
    <property type="match status" value="1"/>
</dbReference>
<dbReference type="PROSITE" id="PS00617">
    <property type="entry name" value="RECF_1"/>
    <property type="match status" value="1"/>
</dbReference>
<dbReference type="PROSITE" id="PS00618">
    <property type="entry name" value="RECF_2"/>
    <property type="match status" value="1"/>
</dbReference>
<proteinExistence type="inferred from homology"/>
<reference key="1">
    <citation type="journal article" date="2003" name="Nucleic Acids Res.">
        <title>Genome sequence of Chlamydophila caviae (Chlamydia psittaci GPIC): examining the role of niche-specific genes in the evolution of the Chlamydiaceae.</title>
        <authorList>
            <person name="Read T.D."/>
            <person name="Myers G.S.A."/>
            <person name="Brunham R.C."/>
            <person name="Nelson W.C."/>
            <person name="Paulsen I.T."/>
            <person name="Heidelberg J.F."/>
            <person name="Holtzapple E.K."/>
            <person name="Khouri H.M."/>
            <person name="Federova N.B."/>
            <person name="Carty H.A."/>
            <person name="Umayam L.A."/>
            <person name="Haft D.H."/>
            <person name="Peterson J.D."/>
            <person name="Beanan M.J."/>
            <person name="White O."/>
            <person name="Salzberg S.L."/>
            <person name="Hsia R.-C."/>
            <person name="McClarty G."/>
            <person name="Rank R.G."/>
            <person name="Bavoil P.M."/>
            <person name="Fraser C.M."/>
        </authorList>
    </citation>
    <scope>NUCLEOTIDE SEQUENCE [LARGE SCALE GENOMIC DNA]</scope>
    <source>
        <strain>ATCC VR-813 / DSM 19441 / 03DC25 / GPIC</strain>
    </source>
</reference>
<organism>
    <name type="scientific">Chlamydia caviae (strain ATCC VR-813 / DSM 19441 / 03DC25 / GPIC)</name>
    <name type="common">Chlamydophila caviae</name>
    <dbReference type="NCBI Taxonomy" id="227941"/>
    <lineage>
        <taxon>Bacteria</taxon>
        <taxon>Pseudomonadati</taxon>
        <taxon>Chlamydiota</taxon>
        <taxon>Chlamydiia</taxon>
        <taxon>Chlamydiales</taxon>
        <taxon>Chlamydiaceae</taxon>
        <taxon>Chlamydia/Chlamydophila group</taxon>
        <taxon>Chlamydia</taxon>
    </lineage>
</organism>
<sequence length="367" mass="41666">MKILSLRLKNFRNYKEAEVSLSPDMNYIFGENAQGKTNLLEALYVLSLGRSFRTTHLTEAIFFGSSHFFLEMTFEKDGFCHTLSTYVDKQGKKILCDHSPIKTLSQLIGMVPIVLFSSKDRSLISGAPADRRLFLNLLLSQCDPQYKHTLSYYHRALLQRNTLLKTKQTSTLSVWDEQLATLGAYLTVSRYFCCEQLNQLVQELWSNSLSEQLRIKFKSSLIKQGNLSQEAIIEELRKQLTTALHRDLELGTTSVGPHREDFTLMINDLSVAQFSSEGQKHSLLAILRLAECLYIKNIYNACPLFCMDDIHAGLDNHRISQLLDLAPTLGQTLMTSTNIPHQSLSETSKIFSVNQAQISIHSHLIVN</sequence>
<evidence type="ECO:0000255" key="1">
    <source>
        <dbReference type="HAMAP-Rule" id="MF_00365"/>
    </source>
</evidence>